<keyword id="KW-0028">Amino-acid biosynthesis</keyword>
<keyword id="KW-0055">Arginine biosynthesis</keyword>
<keyword id="KW-0067">ATP-binding</keyword>
<keyword id="KW-0963">Cytoplasm</keyword>
<keyword id="KW-0418">Kinase</keyword>
<keyword id="KW-0547">Nucleotide-binding</keyword>
<keyword id="KW-0808">Transferase</keyword>
<organism>
    <name type="scientific">Prochlorococcus marinus (strain MIT 9312)</name>
    <dbReference type="NCBI Taxonomy" id="74546"/>
    <lineage>
        <taxon>Bacteria</taxon>
        <taxon>Bacillati</taxon>
        <taxon>Cyanobacteriota</taxon>
        <taxon>Cyanophyceae</taxon>
        <taxon>Synechococcales</taxon>
        <taxon>Prochlorococcaceae</taxon>
        <taxon>Prochlorococcus</taxon>
    </lineage>
</organism>
<gene>
    <name evidence="1" type="primary">argB</name>
    <name type="ordered locus">PMT9312_0500</name>
</gene>
<accession>Q31C34</accession>
<comment type="function">
    <text evidence="1">Catalyzes the ATP-dependent phosphorylation of N-acetyl-L-glutamate.</text>
</comment>
<comment type="catalytic activity">
    <reaction evidence="1">
        <text>N-acetyl-L-glutamate + ATP = N-acetyl-L-glutamyl 5-phosphate + ADP</text>
        <dbReference type="Rhea" id="RHEA:14629"/>
        <dbReference type="ChEBI" id="CHEBI:30616"/>
        <dbReference type="ChEBI" id="CHEBI:44337"/>
        <dbReference type="ChEBI" id="CHEBI:57936"/>
        <dbReference type="ChEBI" id="CHEBI:456216"/>
        <dbReference type="EC" id="2.7.2.8"/>
    </reaction>
</comment>
<comment type="pathway">
    <text evidence="1">Amino-acid biosynthesis; L-arginine biosynthesis; N(2)-acetyl-L-ornithine from L-glutamate: step 2/4.</text>
</comment>
<comment type="subcellular location">
    <subcellularLocation>
        <location evidence="1">Cytoplasm</location>
    </subcellularLocation>
</comment>
<comment type="similarity">
    <text evidence="1">Belongs to the acetylglutamate kinase family. ArgB subfamily.</text>
</comment>
<feature type="chain" id="PRO_0000264732" description="Acetylglutamate kinase">
    <location>
        <begin position="1"/>
        <end position="283"/>
    </location>
</feature>
<feature type="binding site" evidence="1">
    <location>
        <begin position="63"/>
        <end position="64"/>
    </location>
    <ligand>
        <name>substrate</name>
    </ligand>
</feature>
<feature type="binding site" evidence="1">
    <location>
        <position position="85"/>
    </location>
    <ligand>
        <name>substrate</name>
    </ligand>
</feature>
<feature type="binding site" evidence="1">
    <location>
        <position position="178"/>
    </location>
    <ligand>
        <name>substrate</name>
    </ligand>
</feature>
<feature type="site" description="Transition state stabilizer" evidence="1">
    <location>
        <position position="28"/>
    </location>
</feature>
<feature type="site" description="Transition state stabilizer" evidence="1">
    <location>
        <position position="241"/>
    </location>
</feature>
<protein>
    <recommendedName>
        <fullName evidence="1">Acetylglutamate kinase</fullName>
        <ecNumber evidence="1">2.7.2.8</ecNumber>
    </recommendedName>
    <alternativeName>
        <fullName evidence="1">N-acetyl-L-glutamate 5-phosphotransferase</fullName>
    </alternativeName>
    <alternativeName>
        <fullName evidence="1">NAG kinase</fullName>
        <shortName evidence="1">NAGK</shortName>
    </alternativeName>
</protein>
<reference key="1">
    <citation type="journal article" date="2006" name="Science">
        <title>Genomic islands and the ecology and evolution of Prochlorococcus.</title>
        <authorList>
            <person name="Coleman M.L."/>
            <person name="Sullivan M.B."/>
            <person name="Martiny A.C."/>
            <person name="Steglich C."/>
            <person name="Barry K."/>
            <person name="Delong E.F."/>
            <person name="Chisholm S.W."/>
        </authorList>
    </citation>
    <scope>NUCLEOTIDE SEQUENCE [LARGE SCALE GENOMIC DNA]</scope>
    <source>
        <strain>MIT 9312</strain>
    </source>
</reference>
<dbReference type="EC" id="2.7.2.8" evidence="1"/>
<dbReference type="EMBL" id="CP000111">
    <property type="protein sequence ID" value="ABB49561.1"/>
    <property type="molecule type" value="Genomic_DNA"/>
</dbReference>
<dbReference type="RefSeq" id="WP_011376059.1">
    <property type="nucleotide sequence ID" value="NC_007577.1"/>
</dbReference>
<dbReference type="SMR" id="Q31C34"/>
<dbReference type="STRING" id="74546.PMT9312_0500"/>
<dbReference type="KEGG" id="pmi:PMT9312_0500"/>
<dbReference type="eggNOG" id="COG0548">
    <property type="taxonomic scope" value="Bacteria"/>
</dbReference>
<dbReference type="HOGENOM" id="CLU_053680_0_0_3"/>
<dbReference type="OrthoDB" id="9803155at2"/>
<dbReference type="UniPathway" id="UPA00068">
    <property type="reaction ID" value="UER00107"/>
</dbReference>
<dbReference type="Proteomes" id="UP000002715">
    <property type="component" value="Chromosome"/>
</dbReference>
<dbReference type="GO" id="GO:0005737">
    <property type="term" value="C:cytoplasm"/>
    <property type="evidence" value="ECO:0007669"/>
    <property type="project" value="UniProtKB-SubCell"/>
</dbReference>
<dbReference type="GO" id="GO:0003991">
    <property type="term" value="F:acetylglutamate kinase activity"/>
    <property type="evidence" value="ECO:0007669"/>
    <property type="project" value="UniProtKB-UniRule"/>
</dbReference>
<dbReference type="GO" id="GO:0005524">
    <property type="term" value="F:ATP binding"/>
    <property type="evidence" value="ECO:0007669"/>
    <property type="project" value="UniProtKB-UniRule"/>
</dbReference>
<dbReference type="GO" id="GO:0042450">
    <property type="term" value="P:arginine biosynthetic process via ornithine"/>
    <property type="evidence" value="ECO:0007669"/>
    <property type="project" value="UniProtKB-UniRule"/>
</dbReference>
<dbReference type="GO" id="GO:0006526">
    <property type="term" value="P:L-arginine biosynthetic process"/>
    <property type="evidence" value="ECO:0007669"/>
    <property type="project" value="UniProtKB-UniPathway"/>
</dbReference>
<dbReference type="CDD" id="cd04250">
    <property type="entry name" value="AAK_NAGK-C"/>
    <property type="match status" value="1"/>
</dbReference>
<dbReference type="FunFam" id="3.40.1160.10:FF:000004">
    <property type="entry name" value="Acetylglutamate kinase"/>
    <property type="match status" value="1"/>
</dbReference>
<dbReference type="Gene3D" id="3.40.1160.10">
    <property type="entry name" value="Acetylglutamate kinase-like"/>
    <property type="match status" value="1"/>
</dbReference>
<dbReference type="HAMAP" id="MF_00082">
    <property type="entry name" value="ArgB"/>
    <property type="match status" value="1"/>
</dbReference>
<dbReference type="InterPro" id="IPR036393">
    <property type="entry name" value="AceGlu_kinase-like_sf"/>
</dbReference>
<dbReference type="InterPro" id="IPR004662">
    <property type="entry name" value="AcgluKinase_fam"/>
</dbReference>
<dbReference type="InterPro" id="IPR037528">
    <property type="entry name" value="ArgB"/>
</dbReference>
<dbReference type="InterPro" id="IPR001048">
    <property type="entry name" value="Asp/Glu/Uridylate_kinase"/>
</dbReference>
<dbReference type="InterPro" id="IPR041727">
    <property type="entry name" value="NAGK-C"/>
</dbReference>
<dbReference type="NCBIfam" id="TIGR00761">
    <property type="entry name" value="argB"/>
    <property type="match status" value="1"/>
</dbReference>
<dbReference type="PANTHER" id="PTHR23342">
    <property type="entry name" value="N-ACETYLGLUTAMATE SYNTHASE"/>
    <property type="match status" value="1"/>
</dbReference>
<dbReference type="PANTHER" id="PTHR23342:SF0">
    <property type="entry name" value="N-ACETYLGLUTAMATE SYNTHASE, MITOCHONDRIAL"/>
    <property type="match status" value="1"/>
</dbReference>
<dbReference type="Pfam" id="PF00696">
    <property type="entry name" value="AA_kinase"/>
    <property type="match status" value="1"/>
</dbReference>
<dbReference type="PIRSF" id="PIRSF000728">
    <property type="entry name" value="NAGK"/>
    <property type="match status" value="1"/>
</dbReference>
<dbReference type="SUPFAM" id="SSF53633">
    <property type="entry name" value="Carbamate kinase-like"/>
    <property type="match status" value="1"/>
</dbReference>
<sequence>MNDSQRVSILSEALPYIQSFSGRKIVIKYGGSVMENDNLKKAFFRDIALLSSVGVCPIVIHGGGPEINNWLKKLEISPKFENGLRITDQKTMDIVEMVLMGRVNKQIVKGVNKTGSLAVGISGLDGNLIQSRELGDGSHGLVGEVTKINPEILDPLISKGYIPIISSIGSTMEGISHNINADFVAGEIAAAINAEKLILLTDTQGILKEKDNKNSLVEKMNLKEARNFIDKKIVTEGMIPKTECCIRALAQGVKAAHIIDGRIEHSLLLEIFTNSGIGTMIVA</sequence>
<evidence type="ECO:0000255" key="1">
    <source>
        <dbReference type="HAMAP-Rule" id="MF_00082"/>
    </source>
</evidence>
<name>ARGB_PROM9</name>
<proteinExistence type="inferred from homology"/>